<sequence>MSRYRGPRLRITRRLGDLPGLTRKAAKRSYPPGQHGQARRKRSEYAIRLEEKQKLRFNYGVSERQLVRYVKKARAQEGSTGTNLLKLLENRLDNVCFRLGFGPTVPGARQLVNHGHVTVNGRVTDIASYQCKPGDVIAIRERKCSKQLAEGNLEFPGLANVPPHLELDKPKLNAKVVGRCEREWVALEINELLVVEYYSRKV</sequence>
<feature type="chain" id="PRO_0000322345" description="Small ribosomal subunit protein uS4">
    <location>
        <begin position="1"/>
        <end position="202"/>
    </location>
</feature>
<feature type="domain" description="S4 RNA-binding" evidence="1">
    <location>
        <begin position="90"/>
        <end position="152"/>
    </location>
</feature>
<feature type="region of interest" description="Disordered" evidence="2">
    <location>
        <begin position="15"/>
        <end position="42"/>
    </location>
</feature>
<organism>
    <name type="scientific">Synechococcus sp. (strain WH7803)</name>
    <dbReference type="NCBI Taxonomy" id="32051"/>
    <lineage>
        <taxon>Bacteria</taxon>
        <taxon>Bacillati</taxon>
        <taxon>Cyanobacteriota</taxon>
        <taxon>Cyanophyceae</taxon>
        <taxon>Synechococcales</taxon>
        <taxon>Synechococcaceae</taxon>
        <taxon>Synechococcus</taxon>
    </lineage>
</organism>
<protein>
    <recommendedName>
        <fullName evidence="1">Small ribosomal subunit protein uS4</fullName>
    </recommendedName>
    <alternativeName>
        <fullName evidence="3">30S ribosomal protein S4</fullName>
    </alternativeName>
</protein>
<keyword id="KW-1185">Reference proteome</keyword>
<keyword id="KW-0687">Ribonucleoprotein</keyword>
<keyword id="KW-0689">Ribosomal protein</keyword>
<keyword id="KW-0694">RNA-binding</keyword>
<keyword id="KW-0699">rRNA-binding</keyword>
<evidence type="ECO:0000255" key="1">
    <source>
        <dbReference type="HAMAP-Rule" id="MF_01306"/>
    </source>
</evidence>
<evidence type="ECO:0000256" key="2">
    <source>
        <dbReference type="SAM" id="MobiDB-lite"/>
    </source>
</evidence>
<evidence type="ECO:0000305" key="3"/>
<reference key="1">
    <citation type="submission" date="2006-05" db="EMBL/GenBank/DDBJ databases">
        <authorList>
            <consortium name="Genoscope"/>
        </authorList>
    </citation>
    <scope>NUCLEOTIDE SEQUENCE [LARGE SCALE GENOMIC DNA]</scope>
    <source>
        <strain>WH7803</strain>
    </source>
</reference>
<comment type="function">
    <text evidence="1">One of the primary rRNA binding proteins, it binds directly to 16S rRNA where it nucleates assembly of the body of the 30S subunit.</text>
</comment>
<comment type="function">
    <text evidence="1">With S5 and S12 plays an important role in translational accuracy.</text>
</comment>
<comment type="subunit">
    <text evidence="1">Part of the 30S ribosomal subunit. Contacts protein S5. The interaction surface between S4 and S5 is involved in control of translational fidelity.</text>
</comment>
<comment type="similarity">
    <text evidence="1">Belongs to the universal ribosomal protein uS4 family.</text>
</comment>
<accession>A5GJA2</accession>
<dbReference type="EMBL" id="CT971583">
    <property type="protein sequence ID" value="CAK23017.1"/>
    <property type="molecule type" value="Genomic_DNA"/>
</dbReference>
<dbReference type="SMR" id="A5GJA2"/>
<dbReference type="STRING" id="32051.SynWH7803_0591"/>
<dbReference type="KEGG" id="syx:SynWH7803_0591"/>
<dbReference type="eggNOG" id="COG0522">
    <property type="taxonomic scope" value="Bacteria"/>
</dbReference>
<dbReference type="HOGENOM" id="CLU_092403_0_5_3"/>
<dbReference type="OrthoDB" id="9803672at2"/>
<dbReference type="Proteomes" id="UP000001566">
    <property type="component" value="Chromosome"/>
</dbReference>
<dbReference type="GO" id="GO:0015935">
    <property type="term" value="C:small ribosomal subunit"/>
    <property type="evidence" value="ECO:0007669"/>
    <property type="project" value="InterPro"/>
</dbReference>
<dbReference type="GO" id="GO:0019843">
    <property type="term" value="F:rRNA binding"/>
    <property type="evidence" value="ECO:0007669"/>
    <property type="project" value="UniProtKB-UniRule"/>
</dbReference>
<dbReference type="GO" id="GO:0003735">
    <property type="term" value="F:structural constituent of ribosome"/>
    <property type="evidence" value="ECO:0007669"/>
    <property type="project" value="InterPro"/>
</dbReference>
<dbReference type="GO" id="GO:0042274">
    <property type="term" value="P:ribosomal small subunit biogenesis"/>
    <property type="evidence" value="ECO:0007669"/>
    <property type="project" value="TreeGrafter"/>
</dbReference>
<dbReference type="GO" id="GO:0006412">
    <property type="term" value="P:translation"/>
    <property type="evidence" value="ECO:0007669"/>
    <property type="project" value="UniProtKB-UniRule"/>
</dbReference>
<dbReference type="CDD" id="cd00165">
    <property type="entry name" value="S4"/>
    <property type="match status" value="1"/>
</dbReference>
<dbReference type="FunFam" id="3.10.290.10:FF:000001">
    <property type="entry name" value="30S ribosomal protein S4"/>
    <property type="match status" value="1"/>
</dbReference>
<dbReference type="FunFam" id="1.10.1050.10:FF:000002">
    <property type="entry name" value="30S ribosomal protein S4, chloroplastic"/>
    <property type="match status" value="1"/>
</dbReference>
<dbReference type="Gene3D" id="1.10.1050.10">
    <property type="entry name" value="Ribosomal Protein S4 Delta 41, Chain A, domain 1"/>
    <property type="match status" value="1"/>
</dbReference>
<dbReference type="Gene3D" id="3.10.290.10">
    <property type="entry name" value="RNA-binding S4 domain"/>
    <property type="match status" value="1"/>
</dbReference>
<dbReference type="HAMAP" id="MF_01306_B">
    <property type="entry name" value="Ribosomal_uS4_B"/>
    <property type="match status" value="1"/>
</dbReference>
<dbReference type="InterPro" id="IPR022801">
    <property type="entry name" value="Ribosomal_uS4"/>
</dbReference>
<dbReference type="InterPro" id="IPR005709">
    <property type="entry name" value="Ribosomal_uS4_bac-type"/>
</dbReference>
<dbReference type="InterPro" id="IPR018079">
    <property type="entry name" value="Ribosomal_uS4_CS"/>
</dbReference>
<dbReference type="InterPro" id="IPR001912">
    <property type="entry name" value="Ribosomal_uS4_N"/>
</dbReference>
<dbReference type="InterPro" id="IPR002942">
    <property type="entry name" value="S4_RNA-bd"/>
</dbReference>
<dbReference type="InterPro" id="IPR036986">
    <property type="entry name" value="S4_RNA-bd_sf"/>
</dbReference>
<dbReference type="NCBIfam" id="NF003717">
    <property type="entry name" value="PRK05327.1"/>
    <property type="match status" value="1"/>
</dbReference>
<dbReference type="NCBIfam" id="TIGR01017">
    <property type="entry name" value="rpsD_bact"/>
    <property type="match status" value="1"/>
</dbReference>
<dbReference type="PANTHER" id="PTHR11831">
    <property type="entry name" value="30S 40S RIBOSOMAL PROTEIN"/>
    <property type="match status" value="1"/>
</dbReference>
<dbReference type="PANTHER" id="PTHR11831:SF4">
    <property type="entry name" value="SMALL RIBOSOMAL SUBUNIT PROTEIN US4M"/>
    <property type="match status" value="1"/>
</dbReference>
<dbReference type="Pfam" id="PF00163">
    <property type="entry name" value="Ribosomal_S4"/>
    <property type="match status" value="1"/>
</dbReference>
<dbReference type="Pfam" id="PF01479">
    <property type="entry name" value="S4"/>
    <property type="match status" value="1"/>
</dbReference>
<dbReference type="SMART" id="SM01390">
    <property type="entry name" value="Ribosomal_S4"/>
    <property type="match status" value="1"/>
</dbReference>
<dbReference type="SMART" id="SM00363">
    <property type="entry name" value="S4"/>
    <property type="match status" value="1"/>
</dbReference>
<dbReference type="SUPFAM" id="SSF55174">
    <property type="entry name" value="Alpha-L RNA-binding motif"/>
    <property type="match status" value="1"/>
</dbReference>
<dbReference type="PROSITE" id="PS00632">
    <property type="entry name" value="RIBOSOMAL_S4"/>
    <property type="match status" value="1"/>
</dbReference>
<dbReference type="PROSITE" id="PS50889">
    <property type="entry name" value="S4"/>
    <property type="match status" value="1"/>
</dbReference>
<proteinExistence type="inferred from homology"/>
<gene>
    <name evidence="1" type="primary">rpsD</name>
    <name evidence="1" type="synonym">rps4</name>
    <name type="ordered locus">SynWH7803_0591</name>
</gene>
<name>RS4_SYNPW</name>